<name>RL13_MYCGI</name>
<dbReference type="EMBL" id="CP000656">
    <property type="protein sequence ID" value="ABP47416.1"/>
    <property type="molecule type" value="Genomic_DNA"/>
</dbReference>
<dbReference type="SMR" id="A4TEL3"/>
<dbReference type="STRING" id="350054.Mflv_4950"/>
<dbReference type="KEGG" id="mgi:Mflv_4950"/>
<dbReference type="eggNOG" id="COG0102">
    <property type="taxonomic scope" value="Bacteria"/>
</dbReference>
<dbReference type="HOGENOM" id="CLU_082184_2_2_11"/>
<dbReference type="OrthoDB" id="9801330at2"/>
<dbReference type="GO" id="GO:0022625">
    <property type="term" value="C:cytosolic large ribosomal subunit"/>
    <property type="evidence" value="ECO:0007669"/>
    <property type="project" value="TreeGrafter"/>
</dbReference>
<dbReference type="GO" id="GO:0003729">
    <property type="term" value="F:mRNA binding"/>
    <property type="evidence" value="ECO:0007669"/>
    <property type="project" value="TreeGrafter"/>
</dbReference>
<dbReference type="GO" id="GO:0003735">
    <property type="term" value="F:structural constituent of ribosome"/>
    <property type="evidence" value="ECO:0007669"/>
    <property type="project" value="InterPro"/>
</dbReference>
<dbReference type="GO" id="GO:0017148">
    <property type="term" value="P:negative regulation of translation"/>
    <property type="evidence" value="ECO:0007669"/>
    <property type="project" value="TreeGrafter"/>
</dbReference>
<dbReference type="GO" id="GO:0006412">
    <property type="term" value="P:translation"/>
    <property type="evidence" value="ECO:0007669"/>
    <property type="project" value="UniProtKB-UniRule"/>
</dbReference>
<dbReference type="CDD" id="cd00392">
    <property type="entry name" value="Ribosomal_L13"/>
    <property type="match status" value="1"/>
</dbReference>
<dbReference type="FunFam" id="3.90.1180.10:FF:000001">
    <property type="entry name" value="50S ribosomal protein L13"/>
    <property type="match status" value="1"/>
</dbReference>
<dbReference type="Gene3D" id="3.90.1180.10">
    <property type="entry name" value="Ribosomal protein L13"/>
    <property type="match status" value="1"/>
</dbReference>
<dbReference type="HAMAP" id="MF_01366">
    <property type="entry name" value="Ribosomal_uL13"/>
    <property type="match status" value="1"/>
</dbReference>
<dbReference type="InterPro" id="IPR005822">
    <property type="entry name" value="Ribosomal_uL13"/>
</dbReference>
<dbReference type="InterPro" id="IPR005823">
    <property type="entry name" value="Ribosomal_uL13_bac-type"/>
</dbReference>
<dbReference type="InterPro" id="IPR036899">
    <property type="entry name" value="Ribosomal_uL13_sf"/>
</dbReference>
<dbReference type="NCBIfam" id="TIGR01066">
    <property type="entry name" value="rplM_bact"/>
    <property type="match status" value="1"/>
</dbReference>
<dbReference type="PANTHER" id="PTHR11545:SF2">
    <property type="entry name" value="LARGE RIBOSOMAL SUBUNIT PROTEIN UL13M"/>
    <property type="match status" value="1"/>
</dbReference>
<dbReference type="PANTHER" id="PTHR11545">
    <property type="entry name" value="RIBOSOMAL PROTEIN L13"/>
    <property type="match status" value="1"/>
</dbReference>
<dbReference type="Pfam" id="PF00572">
    <property type="entry name" value="Ribosomal_L13"/>
    <property type="match status" value="1"/>
</dbReference>
<dbReference type="PIRSF" id="PIRSF002181">
    <property type="entry name" value="Ribosomal_L13"/>
    <property type="match status" value="1"/>
</dbReference>
<dbReference type="SUPFAM" id="SSF52161">
    <property type="entry name" value="Ribosomal protein L13"/>
    <property type="match status" value="1"/>
</dbReference>
<evidence type="ECO:0000255" key="1">
    <source>
        <dbReference type="HAMAP-Rule" id="MF_01366"/>
    </source>
</evidence>
<evidence type="ECO:0000305" key="2"/>
<feature type="chain" id="PRO_1000087094" description="Large ribosomal subunit protein uL13">
    <location>
        <begin position="1"/>
        <end position="147"/>
    </location>
</feature>
<accession>A4TEL3</accession>
<reference key="1">
    <citation type="submission" date="2007-04" db="EMBL/GenBank/DDBJ databases">
        <title>Complete sequence of chromosome of Mycobacterium gilvum PYR-GCK.</title>
        <authorList>
            <consortium name="US DOE Joint Genome Institute"/>
            <person name="Copeland A."/>
            <person name="Lucas S."/>
            <person name="Lapidus A."/>
            <person name="Barry K."/>
            <person name="Detter J.C."/>
            <person name="Glavina del Rio T."/>
            <person name="Hammon N."/>
            <person name="Israni S."/>
            <person name="Dalin E."/>
            <person name="Tice H."/>
            <person name="Pitluck S."/>
            <person name="Chain P."/>
            <person name="Malfatti S."/>
            <person name="Shin M."/>
            <person name="Vergez L."/>
            <person name="Schmutz J."/>
            <person name="Larimer F."/>
            <person name="Land M."/>
            <person name="Hauser L."/>
            <person name="Kyrpides N."/>
            <person name="Mikhailova N."/>
            <person name="Miller C."/>
            <person name="Richardson P."/>
        </authorList>
    </citation>
    <scope>NUCLEOTIDE SEQUENCE [LARGE SCALE GENOMIC DNA]</scope>
    <source>
        <strain>PYR-GCK</strain>
    </source>
</reference>
<protein>
    <recommendedName>
        <fullName evidence="1">Large ribosomal subunit protein uL13</fullName>
    </recommendedName>
    <alternativeName>
        <fullName evidence="2">50S ribosomal protein L13</fullName>
    </alternativeName>
</protein>
<keyword id="KW-0687">Ribonucleoprotein</keyword>
<keyword id="KW-0689">Ribosomal protein</keyword>
<gene>
    <name evidence="1" type="primary">rplM</name>
    <name type="ordered locus">Mflv_4950</name>
</gene>
<sequence>MSTYTPKAGDTTRSWYVIDATDVVLGRLAVEAAKLLRGKHKPTFTPNVDGGDFVIIINADKISLSGDKLTKKFAYSHSGYPGGLRKRAIGDLLAKHPTRVVENAITGMLPHTKLGRQIQKKLKVYAGPEHPHTAQQPVPFEIKQVAQ</sequence>
<comment type="function">
    <text evidence="1">This protein is one of the early assembly proteins of the 50S ribosomal subunit, although it is not seen to bind rRNA by itself. It is important during the early stages of 50S assembly.</text>
</comment>
<comment type="subunit">
    <text evidence="1">Part of the 50S ribosomal subunit.</text>
</comment>
<comment type="similarity">
    <text evidence="1">Belongs to the universal ribosomal protein uL13 family.</text>
</comment>
<organism>
    <name type="scientific">Mycolicibacterium gilvum (strain PYR-GCK)</name>
    <name type="common">Mycobacterium gilvum (strain PYR-GCK)</name>
    <dbReference type="NCBI Taxonomy" id="350054"/>
    <lineage>
        <taxon>Bacteria</taxon>
        <taxon>Bacillati</taxon>
        <taxon>Actinomycetota</taxon>
        <taxon>Actinomycetes</taxon>
        <taxon>Mycobacteriales</taxon>
        <taxon>Mycobacteriaceae</taxon>
        <taxon>Mycolicibacterium</taxon>
    </lineage>
</organism>
<proteinExistence type="inferred from homology"/>